<protein>
    <recommendedName>
        <fullName evidence="1">Shikimate kinase</fullName>
        <shortName evidence="1">SK</shortName>
        <ecNumber evidence="1">2.7.1.71</ecNumber>
    </recommendedName>
</protein>
<gene>
    <name evidence="1" type="primary">aroK</name>
    <name type="ordered locus">BF0235</name>
</gene>
<dbReference type="EC" id="2.7.1.71" evidence="1"/>
<dbReference type="EMBL" id="AP006841">
    <property type="protein sequence ID" value="BAD46984.1"/>
    <property type="molecule type" value="Genomic_DNA"/>
</dbReference>
<dbReference type="RefSeq" id="WP_005783866.1">
    <property type="nucleotide sequence ID" value="NZ_UYXF01000014.1"/>
</dbReference>
<dbReference type="RefSeq" id="YP_097518.1">
    <property type="nucleotide sequence ID" value="NC_006347.1"/>
</dbReference>
<dbReference type="SMR" id="Q64ZU2"/>
<dbReference type="STRING" id="295405.BF0235"/>
<dbReference type="KEGG" id="bfr:BF0235"/>
<dbReference type="PATRIC" id="fig|295405.11.peg.265"/>
<dbReference type="HOGENOM" id="CLU_057607_4_0_10"/>
<dbReference type="OrthoDB" id="9800332at2"/>
<dbReference type="UniPathway" id="UPA00053">
    <property type="reaction ID" value="UER00088"/>
</dbReference>
<dbReference type="Proteomes" id="UP000002197">
    <property type="component" value="Chromosome"/>
</dbReference>
<dbReference type="GO" id="GO:0005829">
    <property type="term" value="C:cytosol"/>
    <property type="evidence" value="ECO:0007669"/>
    <property type="project" value="TreeGrafter"/>
</dbReference>
<dbReference type="GO" id="GO:0005524">
    <property type="term" value="F:ATP binding"/>
    <property type="evidence" value="ECO:0007669"/>
    <property type="project" value="UniProtKB-UniRule"/>
</dbReference>
<dbReference type="GO" id="GO:0000287">
    <property type="term" value="F:magnesium ion binding"/>
    <property type="evidence" value="ECO:0007669"/>
    <property type="project" value="UniProtKB-UniRule"/>
</dbReference>
<dbReference type="GO" id="GO:0004765">
    <property type="term" value="F:shikimate kinase activity"/>
    <property type="evidence" value="ECO:0007669"/>
    <property type="project" value="UniProtKB-UniRule"/>
</dbReference>
<dbReference type="GO" id="GO:0008652">
    <property type="term" value="P:amino acid biosynthetic process"/>
    <property type="evidence" value="ECO:0007669"/>
    <property type="project" value="UniProtKB-KW"/>
</dbReference>
<dbReference type="GO" id="GO:0009073">
    <property type="term" value="P:aromatic amino acid family biosynthetic process"/>
    <property type="evidence" value="ECO:0007669"/>
    <property type="project" value="UniProtKB-KW"/>
</dbReference>
<dbReference type="GO" id="GO:0009423">
    <property type="term" value="P:chorismate biosynthetic process"/>
    <property type="evidence" value="ECO:0007669"/>
    <property type="project" value="UniProtKB-UniRule"/>
</dbReference>
<dbReference type="CDD" id="cd00464">
    <property type="entry name" value="SK"/>
    <property type="match status" value="1"/>
</dbReference>
<dbReference type="Gene3D" id="3.40.50.300">
    <property type="entry name" value="P-loop containing nucleotide triphosphate hydrolases"/>
    <property type="match status" value="1"/>
</dbReference>
<dbReference type="HAMAP" id="MF_00109">
    <property type="entry name" value="Shikimate_kinase"/>
    <property type="match status" value="1"/>
</dbReference>
<dbReference type="InterPro" id="IPR027417">
    <property type="entry name" value="P-loop_NTPase"/>
</dbReference>
<dbReference type="InterPro" id="IPR031322">
    <property type="entry name" value="Shikimate/glucono_kinase"/>
</dbReference>
<dbReference type="InterPro" id="IPR000623">
    <property type="entry name" value="Shikimate_kinase/TSH1"/>
</dbReference>
<dbReference type="NCBIfam" id="NF010555">
    <property type="entry name" value="PRK13949.1"/>
    <property type="match status" value="1"/>
</dbReference>
<dbReference type="PANTHER" id="PTHR21087">
    <property type="entry name" value="SHIKIMATE KINASE"/>
    <property type="match status" value="1"/>
</dbReference>
<dbReference type="PANTHER" id="PTHR21087:SF16">
    <property type="entry name" value="SHIKIMATE KINASE 1, CHLOROPLASTIC"/>
    <property type="match status" value="1"/>
</dbReference>
<dbReference type="Pfam" id="PF01202">
    <property type="entry name" value="SKI"/>
    <property type="match status" value="1"/>
</dbReference>
<dbReference type="PRINTS" id="PR01100">
    <property type="entry name" value="SHIKIMTKNASE"/>
</dbReference>
<dbReference type="SUPFAM" id="SSF52540">
    <property type="entry name" value="P-loop containing nucleoside triphosphate hydrolases"/>
    <property type="match status" value="1"/>
</dbReference>
<name>AROK_BACFR</name>
<proteinExistence type="inferred from homology"/>
<feature type="chain" id="PRO_0000237842" description="Shikimate kinase">
    <location>
        <begin position="1"/>
        <end position="179"/>
    </location>
</feature>
<feature type="binding site" evidence="1">
    <location>
        <begin position="11"/>
        <end position="16"/>
    </location>
    <ligand>
        <name>ATP</name>
        <dbReference type="ChEBI" id="CHEBI:30616"/>
    </ligand>
</feature>
<feature type="binding site" evidence="1">
    <location>
        <position position="15"/>
    </location>
    <ligand>
        <name>Mg(2+)</name>
        <dbReference type="ChEBI" id="CHEBI:18420"/>
    </ligand>
</feature>
<feature type="binding site" evidence="1">
    <location>
        <position position="33"/>
    </location>
    <ligand>
        <name>substrate</name>
    </ligand>
</feature>
<feature type="binding site" evidence="1">
    <location>
        <position position="57"/>
    </location>
    <ligand>
        <name>substrate</name>
    </ligand>
</feature>
<feature type="binding site" evidence="1">
    <location>
        <position position="79"/>
    </location>
    <ligand>
        <name>substrate</name>
    </ligand>
</feature>
<feature type="binding site" evidence="1">
    <location>
        <position position="118"/>
    </location>
    <ligand>
        <name>ATP</name>
        <dbReference type="ChEBI" id="CHEBI:30616"/>
    </ligand>
</feature>
<feature type="binding site" evidence="1">
    <location>
        <position position="140"/>
    </location>
    <ligand>
        <name>substrate</name>
    </ligand>
</feature>
<keyword id="KW-0028">Amino-acid biosynthesis</keyword>
<keyword id="KW-0057">Aromatic amino acid biosynthesis</keyword>
<keyword id="KW-0067">ATP-binding</keyword>
<keyword id="KW-0963">Cytoplasm</keyword>
<keyword id="KW-0418">Kinase</keyword>
<keyword id="KW-0460">Magnesium</keyword>
<keyword id="KW-0479">Metal-binding</keyword>
<keyword id="KW-0547">Nucleotide-binding</keyword>
<keyword id="KW-0808">Transferase</keyword>
<organism>
    <name type="scientific">Bacteroides fragilis (strain YCH46)</name>
    <dbReference type="NCBI Taxonomy" id="295405"/>
    <lineage>
        <taxon>Bacteria</taxon>
        <taxon>Pseudomonadati</taxon>
        <taxon>Bacteroidota</taxon>
        <taxon>Bacteroidia</taxon>
        <taxon>Bacteroidales</taxon>
        <taxon>Bacteroidaceae</taxon>
        <taxon>Bacteroides</taxon>
    </lineage>
</organism>
<sequence>MIRIFLTGYMGAGKTTLGKALARELHIPFIDLDWYIEERFHKTVGELFSERGEASFRELEKNMLHEVGEFEDVVISTGGGAPCFFDNMEYMNRVGTTVFLDVDPKVLFSRLRVAKQQRPILQGKKDDELLDFIVQALEKRAPFYRQANYIYCADKLEDRSQIETSVQQLRKLLNLHIAS</sequence>
<accession>Q64ZU2</accession>
<evidence type="ECO:0000255" key="1">
    <source>
        <dbReference type="HAMAP-Rule" id="MF_00109"/>
    </source>
</evidence>
<reference key="1">
    <citation type="journal article" date="2004" name="Proc. Natl. Acad. Sci. U.S.A.">
        <title>Genomic analysis of Bacteroides fragilis reveals extensive DNA inversions regulating cell surface adaptation.</title>
        <authorList>
            <person name="Kuwahara T."/>
            <person name="Yamashita A."/>
            <person name="Hirakawa H."/>
            <person name="Nakayama H."/>
            <person name="Toh H."/>
            <person name="Okada N."/>
            <person name="Kuhara S."/>
            <person name="Hattori M."/>
            <person name="Hayashi T."/>
            <person name="Ohnishi Y."/>
        </authorList>
    </citation>
    <scope>NUCLEOTIDE SEQUENCE [LARGE SCALE GENOMIC DNA]</scope>
    <source>
        <strain>YCH46</strain>
    </source>
</reference>
<comment type="function">
    <text evidence="1">Catalyzes the specific phosphorylation of the 3-hydroxyl group of shikimic acid using ATP as a cosubstrate.</text>
</comment>
<comment type="catalytic activity">
    <reaction evidence="1">
        <text>shikimate + ATP = 3-phosphoshikimate + ADP + H(+)</text>
        <dbReference type="Rhea" id="RHEA:13121"/>
        <dbReference type="ChEBI" id="CHEBI:15378"/>
        <dbReference type="ChEBI" id="CHEBI:30616"/>
        <dbReference type="ChEBI" id="CHEBI:36208"/>
        <dbReference type="ChEBI" id="CHEBI:145989"/>
        <dbReference type="ChEBI" id="CHEBI:456216"/>
        <dbReference type="EC" id="2.7.1.71"/>
    </reaction>
</comment>
<comment type="cofactor">
    <cofactor evidence="1">
        <name>Mg(2+)</name>
        <dbReference type="ChEBI" id="CHEBI:18420"/>
    </cofactor>
    <text evidence="1">Binds 1 Mg(2+) ion per subunit.</text>
</comment>
<comment type="pathway">
    <text evidence="1">Metabolic intermediate biosynthesis; chorismate biosynthesis; chorismate from D-erythrose 4-phosphate and phosphoenolpyruvate: step 5/7.</text>
</comment>
<comment type="subunit">
    <text evidence="1">Monomer.</text>
</comment>
<comment type="subcellular location">
    <subcellularLocation>
        <location evidence="1">Cytoplasm</location>
    </subcellularLocation>
</comment>
<comment type="similarity">
    <text evidence="1">Belongs to the shikimate kinase family.</text>
</comment>